<reference key="1">
    <citation type="submission" date="2008-02" db="EMBL/GenBank/DDBJ databases">
        <title>Complete sequence of Escherichia coli C str. ATCC 8739.</title>
        <authorList>
            <person name="Copeland A."/>
            <person name="Lucas S."/>
            <person name="Lapidus A."/>
            <person name="Glavina del Rio T."/>
            <person name="Dalin E."/>
            <person name="Tice H."/>
            <person name="Bruce D."/>
            <person name="Goodwin L."/>
            <person name="Pitluck S."/>
            <person name="Kiss H."/>
            <person name="Brettin T."/>
            <person name="Detter J.C."/>
            <person name="Han C."/>
            <person name="Kuske C.R."/>
            <person name="Schmutz J."/>
            <person name="Larimer F."/>
            <person name="Land M."/>
            <person name="Hauser L."/>
            <person name="Kyrpides N."/>
            <person name="Mikhailova N."/>
            <person name="Ingram L."/>
            <person name="Richardson P."/>
        </authorList>
    </citation>
    <scope>NUCLEOTIDE SEQUENCE [LARGE SCALE GENOMIC DNA]</scope>
    <source>
        <strain>ATCC 8739 / DSM 1576 / NBRC 3972 / NCIMB 8545 / WDCM 00012 / Crooks</strain>
    </source>
</reference>
<protein>
    <recommendedName>
        <fullName evidence="1">L-ribulose-5-phosphate 3-epimerase UlaE</fullName>
        <ecNumber evidence="1">5.1.3.22</ecNumber>
    </recommendedName>
    <alternativeName>
        <fullName evidence="1">L-ascorbate utilization protein E</fullName>
    </alternativeName>
    <alternativeName>
        <fullName evidence="1">L-xylulose-5-phosphate 3-epimerase</fullName>
    </alternativeName>
</protein>
<proteinExistence type="inferred from homology"/>
<evidence type="ECO:0000255" key="1">
    <source>
        <dbReference type="HAMAP-Rule" id="MF_01951"/>
    </source>
</evidence>
<comment type="function">
    <text evidence="1">Catalyzes the isomerization of L-xylulose-5-phosphate to L-ribulose-5-phosphate. Is involved in the anaerobic L-ascorbate utilization.</text>
</comment>
<comment type="catalytic activity">
    <reaction evidence="1">
        <text>L-ribulose 5-phosphate = L-xylulose 5-phosphate</text>
        <dbReference type="Rhea" id="RHEA:18497"/>
        <dbReference type="ChEBI" id="CHEBI:57829"/>
        <dbReference type="ChEBI" id="CHEBI:58226"/>
        <dbReference type="EC" id="5.1.3.22"/>
    </reaction>
</comment>
<comment type="pathway">
    <text evidence="1">Cofactor degradation; L-ascorbate degradation; D-xylulose 5-phosphate from L-ascorbate: step 3/4.</text>
</comment>
<comment type="induction">
    <text evidence="1">Induced by L-ascorbate. Repressed by UlaR.</text>
</comment>
<comment type="similarity">
    <text evidence="1">Belongs to the L-ribulose-5-phosphate 3-epimerase family.</text>
</comment>
<sequence>MLSKQIPLGIYEKALPAGECWLERLQLAKTLGFDFVEMSVDETDERLSRLDWSREQRLALVNAIVETGVRVPSMCLSAHRRFPLGSEDDAVRAQGLEIMRKAIQFAQDVGIRVIQLAGYDVYYQEANNETRRRFRDGLKESVEMASRAQVTLAMEIMDYPLMNSISKALGYAHYLNNPWFQLYPDIGNLSAWDNDVQMELQAGIGHIVAVHVKDTKSGVFKNVPFGEGVVDFERCFETLKQSGYCGPYLIEMWSETAEDPAAEVAKARDWVKARMAKAGMVEAA</sequence>
<gene>
    <name evidence="1" type="primary">ulaE</name>
    <name type="ordered locus">EcolC_3816</name>
</gene>
<feature type="chain" id="PRO_1000088483" description="L-ribulose-5-phosphate 3-epimerase UlaE">
    <location>
        <begin position="1"/>
        <end position="284"/>
    </location>
</feature>
<organism>
    <name type="scientific">Escherichia coli (strain ATCC 8739 / DSM 1576 / NBRC 3972 / NCIMB 8545 / WDCM 00012 / Crooks)</name>
    <dbReference type="NCBI Taxonomy" id="481805"/>
    <lineage>
        <taxon>Bacteria</taxon>
        <taxon>Pseudomonadati</taxon>
        <taxon>Pseudomonadota</taxon>
        <taxon>Gammaproteobacteria</taxon>
        <taxon>Enterobacterales</taxon>
        <taxon>Enterobacteriaceae</taxon>
        <taxon>Escherichia</taxon>
    </lineage>
</organism>
<keyword id="KW-0413">Isomerase</keyword>
<accession>B1IT09</accession>
<name>ULAE_ECOLC</name>
<dbReference type="EC" id="5.1.3.22" evidence="1"/>
<dbReference type="EMBL" id="CP000946">
    <property type="protein sequence ID" value="ACA79420.1"/>
    <property type="molecule type" value="Genomic_DNA"/>
</dbReference>
<dbReference type="RefSeq" id="WP_000949513.1">
    <property type="nucleotide sequence ID" value="NZ_MTFT01000012.1"/>
</dbReference>
<dbReference type="SMR" id="B1IT09"/>
<dbReference type="KEGG" id="ecl:EcolC_3816"/>
<dbReference type="HOGENOM" id="CLU_082738_0_0_6"/>
<dbReference type="UniPathway" id="UPA00263">
    <property type="reaction ID" value="UER00379"/>
</dbReference>
<dbReference type="GO" id="GO:0016861">
    <property type="term" value="F:intramolecular oxidoreductase activity, interconverting aldoses and ketoses"/>
    <property type="evidence" value="ECO:0007669"/>
    <property type="project" value="InterPro"/>
</dbReference>
<dbReference type="GO" id="GO:0034015">
    <property type="term" value="F:L-ribulose-5-phosphate 3-epimerase activity"/>
    <property type="evidence" value="ECO:0007669"/>
    <property type="project" value="UniProtKB-UniRule"/>
</dbReference>
<dbReference type="GO" id="GO:0019854">
    <property type="term" value="P:L-ascorbic acid catabolic process"/>
    <property type="evidence" value="ECO:0007669"/>
    <property type="project" value="UniProtKB-UniRule"/>
</dbReference>
<dbReference type="FunFam" id="3.20.20.150:FF:000003">
    <property type="entry name" value="L-ribulose-5-phosphate 3-epimerase UlaE"/>
    <property type="match status" value="1"/>
</dbReference>
<dbReference type="Gene3D" id="3.20.20.150">
    <property type="entry name" value="Divalent-metal-dependent TIM barrel enzymes"/>
    <property type="match status" value="1"/>
</dbReference>
<dbReference type="HAMAP" id="MF_01951">
    <property type="entry name" value="UlaE"/>
    <property type="match status" value="1"/>
</dbReference>
<dbReference type="InterPro" id="IPR004560">
    <property type="entry name" value="L-Ru-5P_3-Epase"/>
</dbReference>
<dbReference type="InterPro" id="IPR023492">
    <property type="entry name" value="L-Ru-5P_3-Epase_Enterobacteria"/>
</dbReference>
<dbReference type="InterPro" id="IPR050417">
    <property type="entry name" value="Sugar_Epim/Isomerase"/>
</dbReference>
<dbReference type="InterPro" id="IPR036237">
    <property type="entry name" value="Xyl_isomerase-like_sf"/>
</dbReference>
<dbReference type="InterPro" id="IPR013022">
    <property type="entry name" value="Xyl_isomerase-like_TIM-brl"/>
</dbReference>
<dbReference type="NCBIfam" id="TIGR00542">
    <property type="entry name" value="hxl6Piso_put"/>
    <property type="match status" value="1"/>
</dbReference>
<dbReference type="NCBIfam" id="NF009688">
    <property type="entry name" value="PRK13209.1"/>
    <property type="match status" value="1"/>
</dbReference>
<dbReference type="NCBIfam" id="NF009689">
    <property type="entry name" value="PRK13210.1"/>
    <property type="match status" value="1"/>
</dbReference>
<dbReference type="PANTHER" id="PTHR43489">
    <property type="entry name" value="ISOMERASE"/>
    <property type="match status" value="1"/>
</dbReference>
<dbReference type="PANTHER" id="PTHR43489:SF8">
    <property type="entry name" value="L-RIBULOSE-5-PHOSPHATE 3-EPIMERASE ULAE"/>
    <property type="match status" value="1"/>
</dbReference>
<dbReference type="Pfam" id="PF01261">
    <property type="entry name" value="AP_endonuc_2"/>
    <property type="match status" value="1"/>
</dbReference>
<dbReference type="SUPFAM" id="SSF51658">
    <property type="entry name" value="Xylose isomerase-like"/>
    <property type="match status" value="1"/>
</dbReference>